<accession>B7N4F3</accession>
<feature type="chain" id="PRO_1000188640" description="tRNA-cytidine(32) 2-sulfurtransferase">
    <location>
        <begin position="1"/>
        <end position="311"/>
    </location>
</feature>
<feature type="short sequence motif" description="PP-loop motif" evidence="1">
    <location>
        <begin position="47"/>
        <end position="52"/>
    </location>
</feature>
<feature type="binding site" evidence="1">
    <location>
        <position position="122"/>
    </location>
    <ligand>
        <name>[4Fe-4S] cluster</name>
        <dbReference type="ChEBI" id="CHEBI:49883"/>
    </ligand>
</feature>
<feature type="binding site" evidence="1">
    <location>
        <position position="125"/>
    </location>
    <ligand>
        <name>[4Fe-4S] cluster</name>
        <dbReference type="ChEBI" id="CHEBI:49883"/>
    </ligand>
</feature>
<feature type="binding site" evidence="1">
    <location>
        <position position="213"/>
    </location>
    <ligand>
        <name>[4Fe-4S] cluster</name>
        <dbReference type="ChEBI" id="CHEBI:49883"/>
    </ligand>
</feature>
<protein>
    <recommendedName>
        <fullName evidence="1">tRNA-cytidine(32) 2-sulfurtransferase</fullName>
        <ecNumber evidence="1">2.8.1.-</ecNumber>
    </recommendedName>
    <alternativeName>
        <fullName evidence="1">Two-thiocytidine biosynthesis protein A</fullName>
    </alternativeName>
    <alternativeName>
        <fullName evidence="1">tRNA 2-thiocytidine biosynthesis protein TtcA</fullName>
    </alternativeName>
</protein>
<dbReference type="EC" id="2.8.1.-" evidence="1"/>
<dbReference type="EMBL" id="CU928163">
    <property type="protein sequence ID" value="CAR12846.1"/>
    <property type="molecule type" value="Genomic_DNA"/>
</dbReference>
<dbReference type="RefSeq" id="WP_000081418.1">
    <property type="nucleotide sequence ID" value="NC_011751.1"/>
</dbReference>
<dbReference type="RefSeq" id="YP_002412383.1">
    <property type="nucleotide sequence ID" value="NC_011751.1"/>
</dbReference>
<dbReference type="SMR" id="B7N4F3"/>
<dbReference type="STRING" id="585056.ECUMN_1641"/>
<dbReference type="GeneID" id="75171471"/>
<dbReference type="KEGG" id="eum:ECUMN_1641"/>
<dbReference type="PATRIC" id="fig|585056.7.peg.1834"/>
<dbReference type="HOGENOM" id="CLU_026481_0_0_6"/>
<dbReference type="Proteomes" id="UP000007097">
    <property type="component" value="Chromosome"/>
</dbReference>
<dbReference type="GO" id="GO:0005737">
    <property type="term" value="C:cytoplasm"/>
    <property type="evidence" value="ECO:0007669"/>
    <property type="project" value="UniProtKB-SubCell"/>
</dbReference>
<dbReference type="GO" id="GO:0051539">
    <property type="term" value="F:4 iron, 4 sulfur cluster binding"/>
    <property type="evidence" value="ECO:0007669"/>
    <property type="project" value="UniProtKB-UniRule"/>
</dbReference>
<dbReference type="GO" id="GO:0005524">
    <property type="term" value="F:ATP binding"/>
    <property type="evidence" value="ECO:0007669"/>
    <property type="project" value="UniProtKB-UniRule"/>
</dbReference>
<dbReference type="GO" id="GO:0000287">
    <property type="term" value="F:magnesium ion binding"/>
    <property type="evidence" value="ECO:0007669"/>
    <property type="project" value="UniProtKB-UniRule"/>
</dbReference>
<dbReference type="GO" id="GO:0016783">
    <property type="term" value="F:sulfurtransferase activity"/>
    <property type="evidence" value="ECO:0007669"/>
    <property type="project" value="UniProtKB-UniRule"/>
</dbReference>
<dbReference type="GO" id="GO:0000049">
    <property type="term" value="F:tRNA binding"/>
    <property type="evidence" value="ECO:0007669"/>
    <property type="project" value="UniProtKB-KW"/>
</dbReference>
<dbReference type="GO" id="GO:0034227">
    <property type="term" value="P:tRNA thio-modification"/>
    <property type="evidence" value="ECO:0007669"/>
    <property type="project" value="UniProtKB-UniRule"/>
</dbReference>
<dbReference type="CDD" id="cd24138">
    <property type="entry name" value="TtcA-like"/>
    <property type="match status" value="1"/>
</dbReference>
<dbReference type="FunFam" id="3.40.50.620:FF:000046">
    <property type="entry name" value="tRNA-cytidine(32) 2-sulfurtransferase"/>
    <property type="match status" value="1"/>
</dbReference>
<dbReference type="Gene3D" id="3.40.50.620">
    <property type="entry name" value="HUPs"/>
    <property type="match status" value="1"/>
</dbReference>
<dbReference type="HAMAP" id="MF_01850">
    <property type="entry name" value="TtcA"/>
    <property type="match status" value="1"/>
</dbReference>
<dbReference type="InterPro" id="IPR014729">
    <property type="entry name" value="Rossmann-like_a/b/a_fold"/>
</dbReference>
<dbReference type="InterPro" id="IPR011063">
    <property type="entry name" value="TilS/TtcA_N"/>
</dbReference>
<dbReference type="InterPro" id="IPR012089">
    <property type="entry name" value="tRNA_Cyd_32_2_STrfase"/>
</dbReference>
<dbReference type="InterPro" id="IPR035107">
    <property type="entry name" value="tRNA_thiolation_TtcA_Ctu1"/>
</dbReference>
<dbReference type="NCBIfam" id="NF007972">
    <property type="entry name" value="PRK10696.1"/>
    <property type="match status" value="1"/>
</dbReference>
<dbReference type="PANTHER" id="PTHR43686:SF1">
    <property type="entry name" value="AMINOTRAN_5 DOMAIN-CONTAINING PROTEIN"/>
    <property type="match status" value="1"/>
</dbReference>
<dbReference type="PANTHER" id="PTHR43686">
    <property type="entry name" value="SULFURTRANSFERASE-RELATED"/>
    <property type="match status" value="1"/>
</dbReference>
<dbReference type="Pfam" id="PF01171">
    <property type="entry name" value="ATP_bind_3"/>
    <property type="match status" value="1"/>
</dbReference>
<dbReference type="PIRSF" id="PIRSF004976">
    <property type="entry name" value="ATPase_YdaO"/>
    <property type="match status" value="1"/>
</dbReference>
<dbReference type="SUPFAM" id="SSF52402">
    <property type="entry name" value="Adenine nucleotide alpha hydrolases-like"/>
    <property type="match status" value="1"/>
</dbReference>
<keyword id="KW-0004">4Fe-4S</keyword>
<keyword id="KW-0067">ATP-binding</keyword>
<keyword id="KW-0963">Cytoplasm</keyword>
<keyword id="KW-0408">Iron</keyword>
<keyword id="KW-0411">Iron-sulfur</keyword>
<keyword id="KW-0460">Magnesium</keyword>
<keyword id="KW-0479">Metal-binding</keyword>
<keyword id="KW-0547">Nucleotide-binding</keyword>
<keyword id="KW-0694">RNA-binding</keyword>
<keyword id="KW-0808">Transferase</keyword>
<keyword id="KW-0819">tRNA processing</keyword>
<keyword id="KW-0820">tRNA-binding</keyword>
<organism>
    <name type="scientific">Escherichia coli O17:K52:H18 (strain UMN026 / ExPEC)</name>
    <dbReference type="NCBI Taxonomy" id="585056"/>
    <lineage>
        <taxon>Bacteria</taxon>
        <taxon>Pseudomonadati</taxon>
        <taxon>Pseudomonadota</taxon>
        <taxon>Gammaproteobacteria</taxon>
        <taxon>Enterobacterales</taxon>
        <taxon>Enterobacteriaceae</taxon>
        <taxon>Escherichia</taxon>
    </lineage>
</organism>
<sequence>MSQNQEISKKEQYNLNKLQKRLRRNVGEAIADFNMIEEGDRIMVCLSGGKDSYTMLEILRNLQQSAPINFSLVAVNLDQKQPGFPEHVLPEYLEKLGVEYKIVEENTYGIVKEKIPEGKTTCSLCSRLRRGILYRTATELGATKIALGHHRDDILQTLFLNMFYGGKMKGMPPKLMSDDGKHIVIRPLAYCREKDIQRFADAKAFPIIPCNLCGSQPNLQRQVIADMLRDWDKRYPGRIETMFSAMQNVVPSHLCDTNLFDFKGITHGSEVVNGGDLAFDREEIPLQPAGWQPEEDENQLDELRLNVVEVK</sequence>
<name>TTCA_ECOLU</name>
<comment type="function">
    <text evidence="1">Catalyzes the ATP-dependent 2-thiolation of cytidine in position 32 of tRNA, to form 2-thiocytidine (s(2)C32). The sulfur atoms are provided by the cysteine/cysteine desulfurase (IscS) system.</text>
</comment>
<comment type="catalytic activity">
    <reaction evidence="1">
        <text>cytidine(32) in tRNA + S-sulfanyl-L-cysteinyl-[cysteine desulfurase] + AH2 + ATP = 2-thiocytidine(32) in tRNA + L-cysteinyl-[cysteine desulfurase] + A + AMP + diphosphate + H(+)</text>
        <dbReference type="Rhea" id="RHEA:57048"/>
        <dbReference type="Rhea" id="RHEA-COMP:10288"/>
        <dbReference type="Rhea" id="RHEA-COMP:12157"/>
        <dbReference type="Rhea" id="RHEA-COMP:12158"/>
        <dbReference type="Rhea" id="RHEA-COMP:14821"/>
        <dbReference type="ChEBI" id="CHEBI:13193"/>
        <dbReference type="ChEBI" id="CHEBI:15378"/>
        <dbReference type="ChEBI" id="CHEBI:17499"/>
        <dbReference type="ChEBI" id="CHEBI:29950"/>
        <dbReference type="ChEBI" id="CHEBI:30616"/>
        <dbReference type="ChEBI" id="CHEBI:33019"/>
        <dbReference type="ChEBI" id="CHEBI:61963"/>
        <dbReference type="ChEBI" id="CHEBI:82748"/>
        <dbReference type="ChEBI" id="CHEBI:141453"/>
        <dbReference type="ChEBI" id="CHEBI:456215"/>
    </reaction>
    <physiologicalReaction direction="left-to-right" evidence="1">
        <dbReference type="Rhea" id="RHEA:57049"/>
    </physiologicalReaction>
</comment>
<comment type="cofactor">
    <cofactor evidence="1">
        <name>Mg(2+)</name>
        <dbReference type="ChEBI" id="CHEBI:18420"/>
    </cofactor>
</comment>
<comment type="cofactor">
    <cofactor evidence="1">
        <name>[4Fe-4S] cluster</name>
        <dbReference type="ChEBI" id="CHEBI:49883"/>
    </cofactor>
    <text evidence="1">Binds 1 [4Fe-4S] cluster per subunit. The cluster is chelated by three Cys residues, the fourth Fe has a free coordination site that may bind a sulfur atom transferred from the persulfide of IscS.</text>
</comment>
<comment type="pathway">
    <text evidence="1">tRNA modification.</text>
</comment>
<comment type="subunit">
    <text evidence="1">Homodimer.</text>
</comment>
<comment type="subcellular location">
    <subcellularLocation>
        <location evidence="1">Cytoplasm</location>
    </subcellularLocation>
</comment>
<comment type="miscellaneous">
    <text evidence="1">The thiolation reaction likely consists of two steps: a first activation step by ATP to form an adenylated intermediate of the target base of tRNA, and a second nucleophilic substitution step of the sulfur (S) atom supplied by the hydrosulfide attached to the Fe-S cluster.</text>
</comment>
<comment type="similarity">
    <text evidence="1">Belongs to the TtcA family.</text>
</comment>
<proteinExistence type="inferred from homology"/>
<gene>
    <name evidence="1" type="primary">ttcA</name>
    <name type="ordered locus">ECUMN_1641</name>
</gene>
<reference key="1">
    <citation type="journal article" date="2009" name="PLoS Genet.">
        <title>Organised genome dynamics in the Escherichia coli species results in highly diverse adaptive paths.</title>
        <authorList>
            <person name="Touchon M."/>
            <person name="Hoede C."/>
            <person name="Tenaillon O."/>
            <person name="Barbe V."/>
            <person name="Baeriswyl S."/>
            <person name="Bidet P."/>
            <person name="Bingen E."/>
            <person name="Bonacorsi S."/>
            <person name="Bouchier C."/>
            <person name="Bouvet O."/>
            <person name="Calteau A."/>
            <person name="Chiapello H."/>
            <person name="Clermont O."/>
            <person name="Cruveiller S."/>
            <person name="Danchin A."/>
            <person name="Diard M."/>
            <person name="Dossat C."/>
            <person name="Karoui M.E."/>
            <person name="Frapy E."/>
            <person name="Garry L."/>
            <person name="Ghigo J.M."/>
            <person name="Gilles A.M."/>
            <person name="Johnson J."/>
            <person name="Le Bouguenec C."/>
            <person name="Lescat M."/>
            <person name="Mangenot S."/>
            <person name="Martinez-Jehanne V."/>
            <person name="Matic I."/>
            <person name="Nassif X."/>
            <person name="Oztas S."/>
            <person name="Petit M.A."/>
            <person name="Pichon C."/>
            <person name="Rouy Z."/>
            <person name="Ruf C.S."/>
            <person name="Schneider D."/>
            <person name="Tourret J."/>
            <person name="Vacherie B."/>
            <person name="Vallenet D."/>
            <person name="Medigue C."/>
            <person name="Rocha E.P.C."/>
            <person name="Denamur E."/>
        </authorList>
    </citation>
    <scope>NUCLEOTIDE SEQUENCE [LARGE SCALE GENOMIC DNA]</scope>
    <source>
        <strain>UMN026 / ExPEC</strain>
    </source>
</reference>
<evidence type="ECO:0000255" key="1">
    <source>
        <dbReference type="HAMAP-Rule" id="MF_01850"/>
    </source>
</evidence>